<organism>
    <name type="scientific">Bradyrhizobium sp. (strain ORS 278)</name>
    <dbReference type="NCBI Taxonomy" id="114615"/>
    <lineage>
        <taxon>Bacteria</taxon>
        <taxon>Pseudomonadati</taxon>
        <taxon>Pseudomonadota</taxon>
        <taxon>Alphaproteobacteria</taxon>
        <taxon>Hyphomicrobiales</taxon>
        <taxon>Nitrobacteraceae</taxon>
        <taxon>Bradyrhizobium</taxon>
    </lineage>
</organism>
<sequence>MKFLDEAKVYVRSGDGGNGCVAFRREKFIEFGGPNGGNGGRGGDVVIEAVDGLNTLIDYRYQQHFKAQKGENGMGKDRHGAGGKSIVLKVPVGTQIFDEDRETLIHDFTAVGERFVLAEGGNGGFGNAHFKSPTNRAPRHANPGQPGEERWIWLRMKLIADAGLVGLPNAGKSTFLSKVSAAKPKIADYPFTTLHPQLGVVNADGREFVLADIPGLIEGAHEGAGLGDRFLGHVERCRVLLHLVDATCEHAGKAYKTVRHELEAYGGDLTDKIEIVALNKIDAVDPDELKKQRDRLKRAAKKTPILISGATGEGVKEALRKLADVVGEQPVSSKAKNAVESAATEEPWAAPVPPQG</sequence>
<protein>
    <recommendedName>
        <fullName evidence="1">GTPase Obg</fullName>
        <ecNumber evidence="1">3.6.5.-</ecNumber>
    </recommendedName>
    <alternativeName>
        <fullName evidence="1">GTP-binding protein Obg</fullName>
    </alternativeName>
</protein>
<reference key="1">
    <citation type="journal article" date="2007" name="Science">
        <title>Legumes symbioses: absence of nod genes in photosynthetic bradyrhizobia.</title>
        <authorList>
            <person name="Giraud E."/>
            <person name="Moulin L."/>
            <person name="Vallenet D."/>
            <person name="Barbe V."/>
            <person name="Cytryn E."/>
            <person name="Avarre J.-C."/>
            <person name="Jaubert M."/>
            <person name="Simon D."/>
            <person name="Cartieaux F."/>
            <person name="Prin Y."/>
            <person name="Bena G."/>
            <person name="Hannibal L."/>
            <person name="Fardoux J."/>
            <person name="Kojadinovic M."/>
            <person name="Vuillet L."/>
            <person name="Lajus A."/>
            <person name="Cruveiller S."/>
            <person name="Rouy Z."/>
            <person name="Mangenot S."/>
            <person name="Segurens B."/>
            <person name="Dossat C."/>
            <person name="Franck W.L."/>
            <person name="Chang W.-S."/>
            <person name="Saunders E."/>
            <person name="Bruce D."/>
            <person name="Richardson P."/>
            <person name="Normand P."/>
            <person name="Dreyfus B."/>
            <person name="Pignol D."/>
            <person name="Stacey G."/>
            <person name="Emerich D."/>
            <person name="Vermeglio A."/>
            <person name="Medigue C."/>
            <person name="Sadowsky M."/>
        </authorList>
    </citation>
    <scope>NUCLEOTIDE SEQUENCE [LARGE SCALE GENOMIC DNA]</scope>
    <source>
        <strain>ORS 278</strain>
    </source>
</reference>
<gene>
    <name evidence="1" type="primary">obg</name>
    <name type="ordered locus">BRADO0432</name>
</gene>
<comment type="function">
    <text evidence="1">An essential GTPase which binds GTP, GDP and possibly (p)ppGpp with moderate affinity, with high nucleotide exchange rates and a fairly low GTP hydrolysis rate. Plays a role in control of the cell cycle, stress response, ribosome biogenesis and in those bacteria that undergo differentiation, in morphogenesis control.</text>
</comment>
<comment type="cofactor">
    <cofactor evidence="1">
        <name>Mg(2+)</name>
        <dbReference type="ChEBI" id="CHEBI:18420"/>
    </cofactor>
</comment>
<comment type="subunit">
    <text evidence="1">Monomer.</text>
</comment>
<comment type="subcellular location">
    <subcellularLocation>
        <location evidence="1">Cytoplasm</location>
    </subcellularLocation>
</comment>
<comment type="similarity">
    <text evidence="1">Belongs to the TRAFAC class OBG-HflX-like GTPase superfamily. OBG GTPase family.</text>
</comment>
<name>OBG_BRASO</name>
<feature type="chain" id="PRO_0000385763" description="GTPase Obg">
    <location>
        <begin position="1"/>
        <end position="356"/>
    </location>
</feature>
<feature type="domain" description="Obg" evidence="2">
    <location>
        <begin position="1"/>
        <end position="159"/>
    </location>
</feature>
<feature type="domain" description="OBG-type G" evidence="1">
    <location>
        <begin position="160"/>
        <end position="327"/>
    </location>
</feature>
<feature type="region of interest" description="Disordered" evidence="3">
    <location>
        <begin position="327"/>
        <end position="356"/>
    </location>
</feature>
<feature type="binding site" evidence="1">
    <location>
        <begin position="166"/>
        <end position="173"/>
    </location>
    <ligand>
        <name>GTP</name>
        <dbReference type="ChEBI" id="CHEBI:37565"/>
    </ligand>
</feature>
<feature type="binding site" evidence="1">
    <location>
        <position position="173"/>
    </location>
    <ligand>
        <name>Mg(2+)</name>
        <dbReference type="ChEBI" id="CHEBI:18420"/>
    </ligand>
</feature>
<feature type="binding site" evidence="1">
    <location>
        <begin position="191"/>
        <end position="195"/>
    </location>
    <ligand>
        <name>GTP</name>
        <dbReference type="ChEBI" id="CHEBI:37565"/>
    </ligand>
</feature>
<feature type="binding site" evidence="1">
    <location>
        <position position="193"/>
    </location>
    <ligand>
        <name>Mg(2+)</name>
        <dbReference type="ChEBI" id="CHEBI:18420"/>
    </ligand>
</feature>
<feature type="binding site" evidence="1">
    <location>
        <begin position="212"/>
        <end position="215"/>
    </location>
    <ligand>
        <name>GTP</name>
        <dbReference type="ChEBI" id="CHEBI:37565"/>
    </ligand>
</feature>
<feature type="binding site" evidence="1">
    <location>
        <begin position="279"/>
        <end position="282"/>
    </location>
    <ligand>
        <name>GTP</name>
        <dbReference type="ChEBI" id="CHEBI:37565"/>
    </ligand>
</feature>
<feature type="binding site" evidence="1">
    <location>
        <begin position="308"/>
        <end position="310"/>
    </location>
    <ligand>
        <name>GTP</name>
        <dbReference type="ChEBI" id="CHEBI:37565"/>
    </ligand>
</feature>
<accession>A4YKF3</accession>
<dbReference type="EC" id="3.6.5.-" evidence="1"/>
<dbReference type="EMBL" id="CU234118">
    <property type="protein sequence ID" value="CAL74379.1"/>
    <property type="molecule type" value="Genomic_DNA"/>
</dbReference>
<dbReference type="RefSeq" id="WP_011923655.1">
    <property type="nucleotide sequence ID" value="NC_009445.1"/>
</dbReference>
<dbReference type="SMR" id="A4YKF3"/>
<dbReference type="STRING" id="114615.BRADO0432"/>
<dbReference type="KEGG" id="bra:BRADO0432"/>
<dbReference type="eggNOG" id="COG0536">
    <property type="taxonomic scope" value="Bacteria"/>
</dbReference>
<dbReference type="HOGENOM" id="CLU_011747_2_0_5"/>
<dbReference type="OrthoDB" id="9807318at2"/>
<dbReference type="Proteomes" id="UP000001994">
    <property type="component" value="Chromosome"/>
</dbReference>
<dbReference type="GO" id="GO:0005737">
    <property type="term" value="C:cytoplasm"/>
    <property type="evidence" value="ECO:0007669"/>
    <property type="project" value="UniProtKB-SubCell"/>
</dbReference>
<dbReference type="GO" id="GO:0005525">
    <property type="term" value="F:GTP binding"/>
    <property type="evidence" value="ECO:0007669"/>
    <property type="project" value="UniProtKB-UniRule"/>
</dbReference>
<dbReference type="GO" id="GO:0003924">
    <property type="term" value="F:GTPase activity"/>
    <property type="evidence" value="ECO:0007669"/>
    <property type="project" value="UniProtKB-UniRule"/>
</dbReference>
<dbReference type="GO" id="GO:0000287">
    <property type="term" value="F:magnesium ion binding"/>
    <property type="evidence" value="ECO:0007669"/>
    <property type="project" value="InterPro"/>
</dbReference>
<dbReference type="GO" id="GO:0042254">
    <property type="term" value="P:ribosome biogenesis"/>
    <property type="evidence" value="ECO:0007669"/>
    <property type="project" value="UniProtKB-UniRule"/>
</dbReference>
<dbReference type="CDD" id="cd01898">
    <property type="entry name" value="Obg"/>
    <property type="match status" value="1"/>
</dbReference>
<dbReference type="FunFam" id="2.70.210.12:FF:000001">
    <property type="entry name" value="GTPase Obg"/>
    <property type="match status" value="1"/>
</dbReference>
<dbReference type="Gene3D" id="2.70.210.12">
    <property type="entry name" value="GTP1/OBG domain"/>
    <property type="match status" value="1"/>
</dbReference>
<dbReference type="Gene3D" id="3.40.50.300">
    <property type="entry name" value="P-loop containing nucleotide triphosphate hydrolases"/>
    <property type="match status" value="1"/>
</dbReference>
<dbReference type="HAMAP" id="MF_01454">
    <property type="entry name" value="GTPase_Obg"/>
    <property type="match status" value="1"/>
</dbReference>
<dbReference type="InterPro" id="IPR031167">
    <property type="entry name" value="G_OBG"/>
</dbReference>
<dbReference type="InterPro" id="IPR006073">
    <property type="entry name" value="GTP-bd"/>
</dbReference>
<dbReference type="InterPro" id="IPR014100">
    <property type="entry name" value="GTP-bd_Obg/CgtA"/>
</dbReference>
<dbReference type="InterPro" id="IPR006074">
    <property type="entry name" value="GTP1-OBG_CS"/>
</dbReference>
<dbReference type="InterPro" id="IPR006169">
    <property type="entry name" value="GTP1_OBG_dom"/>
</dbReference>
<dbReference type="InterPro" id="IPR036726">
    <property type="entry name" value="GTP1_OBG_dom_sf"/>
</dbReference>
<dbReference type="InterPro" id="IPR045086">
    <property type="entry name" value="OBG_GTPase"/>
</dbReference>
<dbReference type="InterPro" id="IPR027417">
    <property type="entry name" value="P-loop_NTPase"/>
</dbReference>
<dbReference type="InterPro" id="IPR005225">
    <property type="entry name" value="Small_GTP-bd"/>
</dbReference>
<dbReference type="NCBIfam" id="TIGR02729">
    <property type="entry name" value="Obg_CgtA"/>
    <property type="match status" value="1"/>
</dbReference>
<dbReference type="NCBIfam" id="NF008955">
    <property type="entry name" value="PRK12297.1"/>
    <property type="match status" value="1"/>
</dbReference>
<dbReference type="NCBIfam" id="NF008956">
    <property type="entry name" value="PRK12299.1"/>
    <property type="match status" value="1"/>
</dbReference>
<dbReference type="NCBIfam" id="TIGR00231">
    <property type="entry name" value="small_GTP"/>
    <property type="match status" value="1"/>
</dbReference>
<dbReference type="PANTHER" id="PTHR11702">
    <property type="entry name" value="DEVELOPMENTALLY REGULATED GTP-BINDING PROTEIN-RELATED"/>
    <property type="match status" value="1"/>
</dbReference>
<dbReference type="PANTHER" id="PTHR11702:SF31">
    <property type="entry name" value="MITOCHONDRIAL RIBOSOME-ASSOCIATED GTPASE 2"/>
    <property type="match status" value="1"/>
</dbReference>
<dbReference type="Pfam" id="PF01018">
    <property type="entry name" value="GTP1_OBG"/>
    <property type="match status" value="1"/>
</dbReference>
<dbReference type="Pfam" id="PF01926">
    <property type="entry name" value="MMR_HSR1"/>
    <property type="match status" value="1"/>
</dbReference>
<dbReference type="PIRSF" id="PIRSF002401">
    <property type="entry name" value="GTP_bd_Obg/CgtA"/>
    <property type="match status" value="1"/>
</dbReference>
<dbReference type="PRINTS" id="PR00326">
    <property type="entry name" value="GTP1OBG"/>
</dbReference>
<dbReference type="SUPFAM" id="SSF82051">
    <property type="entry name" value="Obg GTP-binding protein N-terminal domain"/>
    <property type="match status" value="1"/>
</dbReference>
<dbReference type="SUPFAM" id="SSF52540">
    <property type="entry name" value="P-loop containing nucleoside triphosphate hydrolases"/>
    <property type="match status" value="1"/>
</dbReference>
<dbReference type="PROSITE" id="PS51710">
    <property type="entry name" value="G_OBG"/>
    <property type="match status" value="1"/>
</dbReference>
<dbReference type="PROSITE" id="PS00905">
    <property type="entry name" value="GTP1_OBG"/>
    <property type="match status" value="1"/>
</dbReference>
<dbReference type="PROSITE" id="PS51883">
    <property type="entry name" value="OBG"/>
    <property type="match status" value="1"/>
</dbReference>
<evidence type="ECO:0000255" key="1">
    <source>
        <dbReference type="HAMAP-Rule" id="MF_01454"/>
    </source>
</evidence>
<evidence type="ECO:0000255" key="2">
    <source>
        <dbReference type="PROSITE-ProRule" id="PRU01231"/>
    </source>
</evidence>
<evidence type="ECO:0000256" key="3">
    <source>
        <dbReference type="SAM" id="MobiDB-lite"/>
    </source>
</evidence>
<proteinExistence type="inferred from homology"/>
<keyword id="KW-0963">Cytoplasm</keyword>
<keyword id="KW-0342">GTP-binding</keyword>
<keyword id="KW-0378">Hydrolase</keyword>
<keyword id="KW-0460">Magnesium</keyword>
<keyword id="KW-0479">Metal-binding</keyword>
<keyword id="KW-0547">Nucleotide-binding</keyword>
<keyword id="KW-1185">Reference proteome</keyword>